<organism>
    <name type="scientific">Renibacterium salmoninarum (strain ATCC 33209 / DSM 20767 / JCM 11484 / NBRC 15589 / NCIMB 2235)</name>
    <dbReference type="NCBI Taxonomy" id="288705"/>
    <lineage>
        <taxon>Bacteria</taxon>
        <taxon>Bacillati</taxon>
        <taxon>Actinomycetota</taxon>
        <taxon>Actinomycetes</taxon>
        <taxon>Micrococcales</taxon>
        <taxon>Micrococcaceae</taxon>
        <taxon>Renibacterium</taxon>
    </lineage>
</organism>
<evidence type="ECO:0000255" key="1">
    <source>
        <dbReference type="HAMAP-Rule" id="MF_01346"/>
    </source>
</evidence>
<sequence length="545" mass="59341">MAELTINADDVRNALNEFAASYEPGNAERVEVGRVTTASDGIARVEGLPSVMANELLRFEDGTLGLAQNLDVREIGVIILGDFTGIEEGQEVHRTGEILSVPVGDQFLGRVVDPLGVPIDGLGEIQAETTRALELQAPGVTQRQSVKEPMQTGLKAIDAMIPIGRGQRQLIIGDRKTGKTAIAVDTILNQQANWASGDVKKQVRCIYVAIGQKASTIAEVRQTLEDNGALEYTTIVASPASDPAGFKYLAPYAGSAIGQHWMYSGKHVLIIFDDLSKQAEAYRAVSLLLRRPPGREAYPGDVFYLHSRLLERCAKLSDELGAGSMTGLPIIETKANDVGAFIPTNVVSITDGQIFLQSDLFNANQRPAVDVGISVSRVGGSAQVKSMKTVSGTLKLDLAQYRDMQAFAMFASDLDAASRQQLTRGSRLMELLKQPQYTPYPVEDQVVSIWAGTHGYLDEVPVEDILRFEREFLEHLRHSTEILTTLAQTNKLEDSTVEALKTSIVDFKKGFFGDGANHLVGAGHEEFDSLSEADVDQEKIVKQKR</sequence>
<dbReference type="EC" id="7.1.2.2" evidence="1"/>
<dbReference type="EMBL" id="CP000910">
    <property type="protein sequence ID" value="ABY23182.1"/>
    <property type="molecule type" value="Genomic_DNA"/>
</dbReference>
<dbReference type="RefSeq" id="WP_012244863.1">
    <property type="nucleotide sequence ID" value="NC_010168.1"/>
</dbReference>
<dbReference type="SMR" id="A9WNC6"/>
<dbReference type="STRING" id="288705.RSal33209_1446"/>
<dbReference type="KEGG" id="rsa:RSal33209_1446"/>
<dbReference type="eggNOG" id="COG0056">
    <property type="taxonomic scope" value="Bacteria"/>
</dbReference>
<dbReference type="HOGENOM" id="CLU_010091_2_1_11"/>
<dbReference type="Proteomes" id="UP000002007">
    <property type="component" value="Chromosome"/>
</dbReference>
<dbReference type="GO" id="GO:0005886">
    <property type="term" value="C:plasma membrane"/>
    <property type="evidence" value="ECO:0007669"/>
    <property type="project" value="UniProtKB-SubCell"/>
</dbReference>
<dbReference type="GO" id="GO:0045259">
    <property type="term" value="C:proton-transporting ATP synthase complex"/>
    <property type="evidence" value="ECO:0007669"/>
    <property type="project" value="UniProtKB-KW"/>
</dbReference>
<dbReference type="GO" id="GO:0043531">
    <property type="term" value="F:ADP binding"/>
    <property type="evidence" value="ECO:0007669"/>
    <property type="project" value="TreeGrafter"/>
</dbReference>
<dbReference type="GO" id="GO:0005524">
    <property type="term" value="F:ATP binding"/>
    <property type="evidence" value="ECO:0007669"/>
    <property type="project" value="UniProtKB-UniRule"/>
</dbReference>
<dbReference type="GO" id="GO:0046933">
    <property type="term" value="F:proton-transporting ATP synthase activity, rotational mechanism"/>
    <property type="evidence" value="ECO:0007669"/>
    <property type="project" value="UniProtKB-UniRule"/>
</dbReference>
<dbReference type="CDD" id="cd18113">
    <property type="entry name" value="ATP-synt_F1_alpha_C"/>
    <property type="match status" value="1"/>
</dbReference>
<dbReference type="CDD" id="cd18116">
    <property type="entry name" value="ATP-synt_F1_alpha_N"/>
    <property type="match status" value="1"/>
</dbReference>
<dbReference type="CDD" id="cd01132">
    <property type="entry name" value="F1-ATPase_alpha_CD"/>
    <property type="match status" value="1"/>
</dbReference>
<dbReference type="FunFam" id="1.20.150.20:FF:000001">
    <property type="entry name" value="ATP synthase subunit alpha"/>
    <property type="match status" value="1"/>
</dbReference>
<dbReference type="FunFam" id="3.40.50.300:FF:000002">
    <property type="entry name" value="ATP synthase subunit alpha"/>
    <property type="match status" value="1"/>
</dbReference>
<dbReference type="Gene3D" id="2.40.30.20">
    <property type="match status" value="1"/>
</dbReference>
<dbReference type="Gene3D" id="1.20.150.20">
    <property type="entry name" value="ATP synthase alpha/beta chain, C-terminal domain"/>
    <property type="match status" value="1"/>
</dbReference>
<dbReference type="Gene3D" id="3.40.50.300">
    <property type="entry name" value="P-loop containing nucleotide triphosphate hydrolases"/>
    <property type="match status" value="1"/>
</dbReference>
<dbReference type="HAMAP" id="MF_01346">
    <property type="entry name" value="ATP_synth_alpha_bact"/>
    <property type="match status" value="1"/>
</dbReference>
<dbReference type="InterPro" id="IPR023366">
    <property type="entry name" value="ATP_synth_asu-like_sf"/>
</dbReference>
<dbReference type="InterPro" id="IPR000793">
    <property type="entry name" value="ATP_synth_asu_C"/>
</dbReference>
<dbReference type="InterPro" id="IPR038376">
    <property type="entry name" value="ATP_synth_asu_C_sf"/>
</dbReference>
<dbReference type="InterPro" id="IPR033732">
    <property type="entry name" value="ATP_synth_F1_a_nt-bd_dom"/>
</dbReference>
<dbReference type="InterPro" id="IPR005294">
    <property type="entry name" value="ATP_synth_F1_asu"/>
</dbReference>
<dbReference type="InterPro" id="IPR020003">
    <property type="entry name" value="ATPase_a/bsu_AS"/>
</dbReference>
<dbReference type="InterPro" id="IPR004100">
    <property type="entry name" value="ATPase_F1/V1/A1_a/bsu_N"/>
</dbReference>
<dbReference type="InterPro" id="IPR036121">
    <property type="entry name" value="ATPase_F1/V1/A1_a/bsu_N_sf"/>
</dbReference>
<dbReference type="InterPro" id="IPR000194">
    <property type="entry name" value="ATPase_F1/V1/A1_a/bsu_nucl-bd"/>
</dbReference>
<dbReference type="InterPro" id="IPR027417">
    <property type="entry name" value="P-loop_NTPase"/>
</dbReference>
<dbReference type="NCBIfam" id="TIGR00962">
    <property type="entry name" value="atpA"/>
    <property type="match status" value="1"/>
</dbReference>
<dbReference type="NCBIfam" id="NF009884">
    <property type="entry name" value="PRK13343.1"/>
    <property type="match status" value="1"/>
</dbReference>
<dbReference type="PANTHER" id="PTHR48082">
    <property type="entry name" value="ATP SYNTHASE SUBUNIT ALPHA, MITOCHONDRIAL"/>
    <property type="match status" value="1"/>
</dbReference>
<dbReference type="PANTHER" id="PTHR48082:SF2">
    <property type="entry name" value="ATP SYNTHASE SUBUNIT ALPHA, MITOCHONDRIAL"/>
    <property type="match status" value="1"/>
</dbReference>
<dbReference type="Pfam" id="PF00006">
    <property type="entry name" value="ATP-synt_ab"/>
    <property type="match status" value="1"/>
</dbReference>
<dbReference type="Pfam" id="PF00306">
    <property type="entry name" value="ATP-synt_ab_C"/>
    <property type="match status" value="1"/>
</dbReference>
<dbReference type="Pfam" id="PF02874">
    <property type="entry name" value="ATP-synt_ab_N"/>
    <property type="match status" value="1"/>
</dbReference>
<dbReference type="SUPFAM" id="SSF47917">
    <property type="entry name" value="C-terminal domain of alpha and beta subunits of F1 ATP synthase"/>
    <property type="match status" value="1"/>
</dbReference>
<dbReference type="SUPFAM" id="SSF50615">
    <property type="entry name" value="N-terminal domain of alpha and beta subunits of F1 ATP synthase"/>
    <property type="match status" value="1"/>
</dbReference>
<dbReference type="SUPFAM" id="SSF52540">
    <property type="entry name" value="P-loop containing nucleoside triphosphate hydrolases"/>
    <property type="match status" value="1"/>
</dbReference>
<dbReference type="PROSITE" id="PS00152">
    <property type="entry name" value="ATPASE_ALPHA_BETA"/>
    <property type="match status" value="1"/>
</dbReference>
<comment type="function">
    <text evidence="1">Produces ATP from ADP in the presence of a proton gradient across the membrane. The alpha chain is a regulatory subunit.</text>
</comment>
<comment type="catalytic activity">
    <reaction evidence="1">
        <text>ATP + H2O + 4 H(+)(in) = ADP + phosphate + 5 H(+)(out)</text>
        <dbReference type="Rhea" id="RHEA:57720"/>
        <dbReference type="ChEBI" id="CHEBI:15377"/>
        <dbReference type="ChEBI" id="CHEBI:15378"/>
        <dbReference type="ChEBI" id="CHEBI:30616"/>
        <dbReference type="ChEBI" id="CHEBI:43474"/>
        <dbReference type="ChEBI" id="CHEBI:456216"/>
        <dbReference type="EC" id="7.1.2.2"/>
    </reaction>
</comment>
<comment type="subunit">
    <text evidence="1">F-type ATPases have 2 components, CF(1) - the catalytic core - and CF(0) - the membrane proton channel. CF(1) has five subunits: alpha(3), beta(3), gamma(1), delta(1), epsilon(1). CF(0) has three main subunits: a(1), b(2) and c(9-12). The alpha and beta chains form an alternating ring which encloses part of the gamma chain. CF(1) is attached to CF(0) by a central stalk formed by the gamma and epsilon chains, while a peripheral stalk is formed by the delta and b chains.</text>
</comment>
<comment type="subcellular location">
    <subcellularLocation>
        <location evidence="1">Cell membrane</location>
        <topology evidence="1">Peripheral membrane protein</topology>
    </subcellularLocation>
</comment>
<comment type="similarity">
    <text evidence="1">Belongs to the ATPase alpha/beta chains family.</text>
</comment>
<proteinExistence type="inferred from homology"/>
<keyword id="KW-0066">ATP synthesis</keyword>
<keyword id="KW-0067">ATP-binding</keyword>
<keyword id="KW-1003">Cell membrane</keyword>
<keyword id="KW-0139">CF(1)</keyword>
<keyword id="KW-0375">Hydrogen ion transport</keyword>
<keyword id="KW-0406">Ion transport</keyword>
<keyword id="KW-0472">Membrane</keyword>
<keyword id="KW-0547">Nucleotide-binding</keyword>
<keyword id="KW-1185">Reference proteome</keyword>
<keyword id="KW-1278">Translocase</keyword>
<keyword id="KW-0813">Transport</keyword>
<protein>
    <recommendedName>
        <fullName evidence="1">ATP synthase subunit alpha</fullName>
        <ecNumber evidence="1">7.1.2.2</ecNumber>
    </recommendedName>
    <alternativeName>
        <fullName evidence="1">ATP synthase F1 sector subunit alpha</fullName>
    </alternativeName>
    <alternativeName>
        <fullName evidence="1">F-ATPase subunit alpha</fullName>
    </alternativeName>
</protein>
<gene>
    <name evidence="1" type="primary">atpA</name>
    <name type="ordered locus">RSal33209_1446</name>
</gene>
<feature type="chain" id="PRO_1000086889" description="ATP synthase subunit alpha">
    <location>
        <begin position="1"/>
        <end position="545"/>
    </location>
</feature>
<feature type="binding site" evidence="1">
    <location>
        <begin position="173"/>
        <end position="180"/>
    </location>
    <ligand>
        <name>ATP</name>
        <dbReference type="ChEBI" id="CHEBI:30616"/>
    </ligand>
</feature>
<feature type="site" description="Required for activity" evidence="1">
    <location>
        <position position="374"/>
    </location>
</feature>
<accession>A9WNC6</accession>
<name>ATPA_RENSM</name>
<reference key="1">
    <citation type="journal article" date="2008" name="J. Bacteriol.">
        <title>Genome sequence of the fish pathogen Renibacterium salmoninarum suggests reductive evolution away from an environmental Arthrobacter ancestor.</title>
        <authorList>
            <person name="Wiens G.D."/>
            <person name="Rockey D.D."/>
            <person name="Wu Z."/>
            <person name="Chang J."/>
            <person name="Levy R."/>
            <person name="Crane S."/>
            <person name="Chen D.S."/>
            <person name="Capri G.R."/>
            <person name="Burnett J.R."/>
            <person name="Sudheesh P.S."/>
            <person name="Schipma M.J."/>
            <person name="Burd H."/>
            <person name="Bhattacharyya A."/>
            <person name="Rhodes L.D."/>
            <person name="Kaul R."/>
            <person name="Strom M.S."/>
        </authorList>
    </citation>
    <scope>NUCLEOTIDE SEQUENCE [LARGE SCALE GENOMIC DNA]</scope>
    <source>
        <strain>ATCC 33209 / DSM 20767 / JCM 11484 / NBRC 15589 / NCIMB 2235</strain>
    </source>
</reference>